<proteinExistence type="inferred from homology"/>
<protein>
    <recommendedName>
        <fullName evidence="1">Phosphoribosylformylglycinamidine cyclo-ligase</fullName>
        <ecNumber evidence="1">6.3.3.1</ecNumber>
    </recommendedName>
    <alternativeName>
        <fullName evidence="1">AIR synthase</fullName>
    </alternativeName>
    <alternativeName>
        <fullName evidence="1">AIRS</fullName>
    </alternativeName>
    <alternativeName>
        <fullName evidence="1">Phosphoribosyl-aminoimidazole synthetase</fullName>
    </alternativeName>
</protein>
<evidence type="ECO:0000255" key="1">
    <source>
        <dbReference type="HAMAP-Rule" id="MF_00741"/>
    </source>
</evidence>
<comment type="catalytic activity">
    <reaction evidence="1">
        <text>2-formamido-N(1)-(5-O-phospho-beta-D-ribosyl)acetamidine + ATP = 5-amino-1-(5-phospho-beta-D-ribosyl)imidazole + ADP + phosphate + H(+)</text>
        <dbReference type="Rhea" id="RHEA:23032"/>
        <dbReference type="ChEBI" id="CHEBI:15378"/>
        <dbReference type="ChEBI" id="CHEBI:30616"/>
        <dbReference type="ChEBI" id="CHEBI:43474"/>
        <dbReference type="ChEBI" id="CHEBI:137981"/>
        <dbReference type="ChEBI" id="CHEBI:147287"/>
        <dbReference type="ChEBI" id="CHEBI:456216"/>
        <dbReference type="EC" id="6.3.3.1"/>
    </reaction>
</comment>
<comment type="pathway">
    <text evidence="1">Purine metabolism; IMP biosynthesis via de novo pathway; 5-amino-1-(5-phospho-D-ribosyl)imidazole from N(2)-formyl-N(1)-(5-phospho-D-ribosyl)glycinamide: step 2/2.</text>
</comment>
<comment type="subcellular location">
    <subcellularLocation>
        <location evidence="1">Cytoplasm</location>
    </subcellularLocation>
</comment>
<comment type="similarity">
    <text evidence="1">Belongs to the AIR synthase family.</text>
</comment>
<keyword id="KW-0067">ATP-binding</keyword>
<keyword id="KW-0963">Cytoplasm</keyword>
<keyword id="KW-0436">Ligase</keyword>
<keyword id="KW-0547">Nucleotide-binding</keyword>
<keyword id="KW-0658">Purine biosynthesis</keyword>
<dbReference type="EC" id="6.3.3.1" evidence="1"/>
<dbReference type="EMBL" id="BX571856">
    <property type="protein sequence ID" value="CAG40048.1"/>
    <property type="molecule type" value="Genomic_DNA"/>
</dbReference>
<dbReference type="RefSeq" id="WP_000030814.1">
    <property type="nucleotide sequence ID" value="NC_002952.2"/>
</dbReference>
<dbReference type="SMR" id="Q6GI13"/>
<dbReference type="KEGG" id="sar:SAR1045"/>
<dbReference type="HOGENOM" id="CLU_047116_0_0_9"/>
<dbReference type="UniPathway" id="UPA00074">
    <property type="reaction ID" value="UER00129"/>
</dbReference>
<dbReference type="Proteomes" id="UP000000596">
    <property type="component" value="Chromosome"/>
</dbReference>
<dbReference type="GO" id="GO:0005829">
    <property type="term" value="C:cytosol"/>
    <property type="evidence" value="ECO:0007669"/>
    <property type="project" value="TreeGrafter"/>
</dbReference>
<dbReference type="GO" id="GO:0005524">
    <property type="term" value="F:ATP binding"/>
    <property type="evidence" value="ECO:0007669"/>
    <property type="project" value="UniProtKB-KW"/>
</dbReference>
<dbReference type="GO" id="GO:0004637">
    <property type="term" value="F:phosphoribosylamine-glycine ligase activity"/>
    <property type="evidence" value="ECO:0007669"/>
    <property type="project" value="TreeGrafter"/>
</dbReference>
<dbReference type="GO" id="GO:0004641">
    <property type="term" value="F:phosphoribosylformylglycinamidine cyclo-ligase activity"/>
    <property type="evidence" value="ECO:0007669"/>
    <property type="project" value="UniProtKB-UniRule"/>
</dbReference>
<dbReference type="GO" id="GO:0006189">
    <property type="term" value="P:'de novo' IMP biosynthetic process"/>
    <property type="evidence" value="ECO:0007669"/>
    <property type="project" value="UniProtKB-UniRule"/>
</dbReference>
<dbReference type="GO" id="GO:0046084">
    <property type="term" value="P:adenine biosynthetic process"/>
    <property type="evidence" value="ECO:0007669"/>
    <property type="project" value="TreeGrafter"/>
</dbReference>
<dbReference type="CDD" id="cd02196">
    <property type="entry name" value="PurM"/>
    <property type="match status" value="1"/>
</dbReference>
<dbReference type="FunFam" id="3.30.1330.10:FF:000001">
    <property type="entry name" value="Phosphoribosylformylglycinamidine cyclo-ligase"/>
    <property type="match status" value="1"/>
</dbReference>
<dbReference type="FunFam" id="3.90.650.10:FF:000001">
    <property type="entry name" value="Phosphoribosylformylglycinamidine cyclo-ligase"/>
    <property type="match status" value="1"/>
</dbReference>
<dbReference type="Gene3D" id="3.90.650.10">
    <property type="entry name" value="PurM-like C-terminal domain"/>
    <property type="match status" value="1"/>
</dbReference>
<dbReference type="Gene3D" id="3.30.1330.10">
    <property type="entry name" value="PurM-like, N-terminal domain"/>
    <property type="match status" value="1"/>
</dbReference>
<dbReference type="HAMAP" id="MF_00741">
    <property type="entry name" value="AIRS"/>
    <property type="match status" value="1"/>
</dbReference>
<dbReference type="InterPro" id="IPR010918">
    <property type="entry name" value="PurM-like_C_dom"/>
</dbReference>
<dbReference type="InterPro" id="IPR036676">
    <property type="entry name" value="PurM-like_C_sf"/>
</dbReference>
<dbReference type="InterPro" id="IPR016188">
    <property type="entry name" value="PurM-like_N"/>
</dbReference>
<dbReference type="InterPro" id="IPR036921">
    <property type="entry name" value="PurM-like_N_sf"/>
</dbReference>
<dbReference type="InterPro" id="IPR004733">
    <property type="entry name" value="PurM_cligase"/>
</dbReference>
<dbReference type="NCBIfam" id="TIGR00878">
    <property type="entry name" value="purM"/>
    <property type="match status" value="1"/>
</dbReference>
<dbReference type="PANTHER" id="PTHR10520:SF12">
    <property type="entry name" value="TRIFUNCTIONAL PURINE BIOSYNTHETIC PROTEIN ADENOSINE-3"/>
    <property type="match status" value="1"/>
</dbReference>
<dbReference type="PANTHER" id="PTHR10520">
    <property type="entry name" value="TRIFUNCTIONAL PURINE BIOSYNTHETIC PROTEIN ADENOSINE-3-RELATED"/>
    <property type="match status" value="1"/>
</dbReference>
<dbReference type="Pfam" id="PF00586">
    <property type="entry name" value="AIRS"/>
    <property type="match status" value="1"/>
</dbReference>
<dbReference type="Pfam" id="PF02769">
    <property type="entry name" value="AIRS_C"/>
    <property type="match status" value="1"/>
</dbReference>
<dbReference type="SUPFAM" id="SSF56042">
    <property type="entry name" value="PurM C-terminal domain-like"/>
    <property type="match status" value="1"/>
</dbReference>
<dbReference type="SUPFAM" id="SSF55326">
    <property type="entry name" value="PurM N-terminal domain-like"/>
    <property type="match status" value="1"/>
</dbReference>
<gene>
    <name evidence="1" type="primary">purM</name>
    <name type="ordered locus">SAR1045</name>
</gene>
<reference key="1">
    <citation type="journal article" date="2004" name="Proc. Natl. Acad. Sci. U.S.A.">
        <title>Complete genomes of two clinical Staphylococcus aureus strains: evidence for the rapid evolution of virulence and drug resistance.</title>
        <authorList>
            <person name="Holden M.T.G."/>
            <person name="Feil E.J."/>
            <person name="Lindsay J.A."/>
            <person name="Peacock S.J."/>
            <person name="Day N.P.J."/>
            <person name="Enright M.C."/>
            <person name="Foster T.J."/>
            <person name="Moore C.E."/>
            <person name="Hurst L."/>
            <person name="Atkin R."/>
            <person name="Barron A."/>
            <person name="Bason N."/>
            <person name="Bentley S.D."/>
            <person name="Chillingworth C."/>
            <person name="Chillingworth T."/>
            <person name="Churcher C."/>
            <person name="Clark L."/>
            <person name="Corton C."/>
            <person name="Cronin A."/>
            <person name="Doggett J."/>
            <person name="Dowd L."/>
            <person name="Feltwell T."/>
            <person name="Hance Z."/>
            <person name="Harris B."/>
            <person name="Hauser H."/>
            <person name="Holroyd S."/>
            <person name="Jagels K."/>
            <person name="James K.D."/>
            <person name="Lennard N."/>
            <person name="Line A."/>
            <person name="Mayes R."/>
            <person name="Moule S."/>
            <person name="Mungall K."/>
            <person name="Ormond D."/>
            <person name="Quail M.A."/>
            <person name="Rabbinowitsch E."/>
            <person name="Rutherford K.M."/>
            <person name="Sanders M."/>
            <person name="Sharp S."/>
            <person name="Simmonds M."/>
            <person name="Stevens K."/>
            <person name="Whitehead S."/>
            <person name="Barrell B.G."/>
            <person name="Spratt B.G."/>
            <person name="Parkhill J."/>
        </authorList>
    </citation>
    <scope>NUCLEOTIDE SEQUENCE [LARGE SCALE GENOMIC DNA]</scope>
    <source>
        <strain>MRSA252</strain>
    </source>
</reference>
<feature type="chain" id="PRO_0000148248" description="Phosphoribosylformylglycinamidine cyclo-ligase">
    <location>
        <begin position="1"/>
        <end position="342"/>
    </location>
</feature>
<sequence>MSKAYEQSGVNIHAGYEAVERMSSHVKRTMRKEVIGGLGGFGATFDLSQLNMTAPVLVSGTDGVGTKLKLAIDYGKHDSIGIDAVAMCVNDILTTGAEPLYFLDYIATNKVVPEVIEQIVKGISDACVETNTALIGGETAEMGEMYHEGEYDVAGFAVGAVEKDDYVDGSEVKEGQVVIGLASSGIHSNGYSLVRKLINESGIDLASNFDNRPFIDVFLEPTKLYVKPVLALKKEVSIKAMNHITGGGFYENIPRALPAGYAARIDTTSFPTPKIFDWLQQQGNIETNEMYNIFNMGIGYTVIVDEKDAPRALKILAEQNVEAYQIGHIVKNESTAIELLGV</sequence>
<accession>Q6GI13</accession>
<organism>
    <name type="scientific">Staphylococcus aureus (strain MRSA252)</name>
    <dbReference type="NCBI Taxonomy" id="282458"/>
    <lineage>
        <taxon>Bacteria</taxon>
        <taxon>Bacillati</taxon>
        <taxon>Bacillota</taxon>
        <taxon>Bacilli</taxon>
        <taxon>Bacillales</taxon>
        <taxon>Staphylococcaceae</taxon>
        <taxon>Staphylococcus</taxon>
    </lineage>
</organism>
<name>PUR5_STAAR</name>